<feature type="chain" id="PRO_1000007611" description="Large ribosomal subunit protein uL29">
    <location>
        <begin position="1"/>
        <end position="66"/>
    </location>
</feature>
<protein>
    <recommendedName>
        <fullName evidence="1">Large ribosomal subunit protein uL29</fullName>
    </recommendedName>
    <alternativeName>
        <fullName evidence="2">50S ribosomal protein L29</fullName>
    </alternativeName>
</protein>
<accession>A6U867</accession>
<organism>
    <name type="scientific">Sinorhizobium medicae (strain WSM419)</name>
    <name type="common">Ensifer medicae</name>
    <dbReference type="NCBI Taxonomy" id="366394"/>
    <lineage>
        <taxon>Bacteria</taxon>
        <taxon>Pseudomonadati</taxon>
        <taxon>Pseudomonadota</taxon>
        <taxon>Alphaproteobacteria</taxon>
        <taxon>Hyphomicrobiales</taxon>
        <taxon>Rhizobiaceae</taxon>
        <taxon>Sinorhizobium/Ensifer group</taxon>
        <taxon>Sinorhizobium</taxon>
    </lineage>
</organism>
<name>RL29_SINMW</name>
<reference key="1">
    <citation type="submission" date="2007-06" db="EMBL/GenBank/DDBJ databases">
        <title>Complete sequence of Sinorhizobium medicae WSM419 chromosome.</title>
        <authorList>
            <consortium name="US DOE Joint Genome Institute"/>
            <person name="Copeland A."/>
            <person name="Lucas S."/>
            <person name="Lapidus A."/>
            <person name="Barry K."/>
            <person name="Glavina del Rio T."/>
            <person name="Dalin E."/>
            <person name="Tice H."/>
            <person name="Pitluck S."/>
            <person name="Chain P."/>
            <person name="Malfatti S."/>
            <person name="Shin M."/>
            <person name="Vergez L."/>
            <person name="Schmutz J."/>
            <person name="Larimer F."/>
            <person name="Land M."/>
            <person name="Hauser L."/>
            <person name="Kyrpides N."/>
            <person name="Mikhailova N."/>
            <person name="Reeve W.G."/>
            <person name="Richardson P."/>
        </authorList>
    </citation>
    <scope>NUCLEOTIDE SEQUENCE [LARGE SCALE GENOMIC DNA]</scope>
    <source>
        <strain>WSM419</strain>
    </source>
</reference>
<proteinExistence type="inferred from homology"/>
<comment type="similarity">
    <text evidence="1">Belongs to the universal ribosomal protein uL29 family.</text>
</comment>
<sequence length="66" mass="7484">MKAADVRALSADQLKEELAKLKKEQFNLRFQKATGQLEKSSRIDEVRKDIARIKTIARQKAAEAKA</sequence>
<keyword id="KW-0687">Ribonucleoprotein</keyword>
<keyword id="KW-0689">Ribosomal protein</keyword>
<evidence type="ECO:0000255" key="1">
    <source>
        <dbReference type="HAMAP-Rule" id="MF_00374"/>
    </source>
</evidence>
<evidence type="ECO:0000305" key="2"/>
<dbReference type="EMBL" id="CP000738">
    <property type="protein sequence ID" value="ABR59847.1"/>
    <property type="molecule type" value="Genomic_DNA"/>
</dbReference>
<dbReference type="RefSeq" id="WP_011975176.1">
    <property type="nucleotide sequence ID" value="NC_009636.1"/>
</dbReference>
<dbReference type="RefSeq" id="YP_001326682.1">
    <property type="nucleotide sequence ID" value="NC_009636.1"/>
</dbReference>
<dbReference type="SMR" id="A6U867"/>
<dbReference type="STRING" id="366394.Smed_0994"/>
<dbReference type="GeneID" id="61614922"/>
<dbReference type="KEGG" id="smd:Smed_0994"/>
<dbReference type="PATRIC" id="fig|366394.8.peg.4115"/>
<dbReference type="eggNOG" id="COG0255">
    <property type="taxonomic scope" value="Bacteria"/>
</dbReference>
<dbReference type="HOGENOM" id="CLU_158491_1_0_5"/>
<dbReference type="OrthoDB" id="9815192at2"/>
<dbReference type="Proteomes" id="UP000001108">
    <property type="component" value="Chromosome"/>
</dbReference>
<dbReference type="GO" id="GO:0022625">
    <property type="term" value="C:cytosolic large ribosomal subunit"/>
    <property type="evidence" value="ECO:0007669"/>
    <property type="project" value="TreeGrafter"/>
</dbReference>
<dbReference type="GO" id="GO:0003735">
    <property type="term" value="F:structural constituent of ribosome"/>
    <property type="evidence" value="ECO:0007669"/>
    <property type="project" value="InterPro"/>
</dbReference>
<dbReference type="GO" id="GO:0006412">
    <property type="term" value="P:translation"/>
    <property type="evidence" value="ECO:0007669"/>
    <property type="project" value="UniProtKB-UniRule"/>
</dbReference>
<dbReference type="CDD" id="cd00427">
    <property type="entry name" value="Ribosomal_L29_HIP"/>
    <property type="match status" value="1"/>
</dbReference>
<dbReference type="FunFam" id="1.10.287.310:FF:000001">
    <property type="entry name" value="50S ribosomal protein L29"/>
    <property type="match status" value="1"/>
</dbReference>
<dbReference type="Gene3D" id="1.10.287.310">
    <property type="match status" value="1"/>
</dbReference>
<dbReference type="HAMAP" id="MF_00374">
    <property type="entry name" value="Ribosomal_uL29"/>
    <property type="match status" value="1"/>
</dbReference>
<dbReference type="InterPro" id="IPR050063">
    <property type="entry name" value="Ribosomal_protein_uL29"/>
</dbReference>
<dbReference type="InterPro" id="IPR001854">
    <property type="entry name" value="Ribosomal_uL29"/>
</dbReference>
<dbReference type="InterPro" id="IPR018254">
    <property type="entry name" value="Ribosomal_uL29_CS"/>
</dbReference>
<dbReference type="InterPro" id="IPR036049">
    <property type="entry name" value="Ribosomal_uL29_sf"/>
</dbReference>
<dbReference type="NCBIfam" id="TIGR00012">
    <property type="entry name" value="L29"/>
    <property type="match status" value="1"/>
</dbReference>
<dbReference type="PANTHER" id="PTHR10916">
    <property type="entry name" value="60S RIBOSOMAL PROTEIN L35/50S RIBOSOMAL PROTEIN L29"/>
    <property type="match status" value="1"/>
</dbReference>
<dbReference type="PANTHER" id="PTHR10916:SF0">
    <property type="entry name" value="LARGE RIBOSOMAL SUBUNIT PROTEIN UL29C"/>
    <property type="match status" value="1"/>
</dbReference>
<dbReference type="Pfam" id="PF00831">
    <property type="entry name" value="Ribosomal_L29"/>
    <property type="match status" value="1"/>
</dbReference>
<dbReference type="SUPFAM" id="SSF46561">
    <property type="entry name" value="Ribosomal protein L29 (L29p)"/>
    <property type="match status" value="1"/>
</dbReference>
<dbReference type="PROSITE" id="PS00579">
    <property type="entry name" value="RIBOSOMAL_L29"/>
    <property type="match status" value="1"/>
</dbReference>
<gene>
    <name evidence="1" type="primary">rpmC</name>
    <name type="ordered locus">Smed_0994</name>
</gene>